<name>TRMD_CLOAB</name>
<organism>
    <name type="scientific">Clostridium acetobutylicum (strain ATCC 824 / DSM 792 / JCM 1419 / IAM 19013 / LMG 5710 / NBRC 13948 / NRRL B-527 / VKM B-1787 / 2291 / W)</name>
    <dbReference type="NCBI Taxonomy" id="272562"/>
    <lineage>
        <taxon>Bacteria</taxon>
        <taxon>Bacillati</taxon>
        <taxon>Bacillota</taxon>
        <taxon>Clostridia</taxon>
        <taxon>Eubacteriales</taxon>
        <taxon>Clostridiaceae</taxon>
        <taxon>Clostridium</taxon>
    </lineage>
</organism>
<dbReference type="EC" id="2.1.1.228"/>
<dbReference type="EMBL" id="AE001437">
    <property type="protein sequence ID" value="AAK79724.1"/>
    <property type="molecule type" value="Genomic_DNA"/>
</dbReference>
<dbReference type="PIR" id="A97117">
    <property type="entry name" value="A97117"/>
</dbReference>
<dbReference type="RefSeq" id="NP_348384.1">
    <property type="nucleotide sequence ID" value="NC_003030.1"/>
</dbReference>
<dbReference type="RefSeq" id="WP_010965065.1">
    <property type="nucleotide sequence ID" value="NC_003030.1"/>
</dbReference>
<dbReference type="SMR" id="Q97I94"/>
<dbReference type="STRING" id="272562.CA_C1758"/>
<dbReference type="GeneID" id="44998253"/>
<dbReference type="KEGG" id="cac:CA_C1758"/>
<dbReference type="PATRIC" id="fig|272562.8.peg.1962"/>
<dbReference type="eggNOG" id="COG0336">
    <property type="taxonomic scope" value="Bacteria"/>
</dbReference>
<dbReference type="HOGENOM" id="CLU_047363_0_1_9"/>
<dbReference type="OrthoDB" id="9807416at2"/>
<dbReference type="Proteomes" id="UP000000814">
    <property type="component" value="Chromosome"/>
</dbReference>
<dbReference type="GO" id="GO:0005829">
    <property type="term" value="C:cytosol"/>
    <property type="evidence" value="ECO:0007669"/>
    <property type="project" value="TreeGrafter"/>
</dbReference>
<dbReference type="GO" id="GO:0052906">
    <property type="term" value="F:tRNA (guanine(37)-N1)-methyltransferase activity"/>
    <property type="evidence" value="ECO:0007669"/>
    <property type="project" value="UniProtKB-UniRule"/>
</dbReference>
<dbReference type="GO" id="GO:0002939">
    <property type="term" value="P:tRNA N1-guanine methylation"/>
    <property type="evidence" value="ECO:0007669"/>
    <property type="project" value="TreeGrafter"/>
</dbReference>
<dbReference type="CDD" id="cd18080">
    <property type="entry name" value="TrmD-like"/>
    <property type="match status" value="1"/>
</dbReference>
<dbReference type="FunFam" id="1.10.1270.20:FF:000001">
    <property type="entry name" value="tRNA (guanine-N(1)-)-methyltransferase"/>
    <property type="match status" value="1"/>
</dbReference>
<dbReference type="FunFam" id="3.40.1280.10:FF:000001">
    <property type="entry name" value="tRNA (guanine-N(1)-)-methyltransferase"/>
    <property type="match status" value="1"/>
</dbReference>
<dbReference type="Gene3D" id="3.40.1280.10">
    <property type="match status" value="1"/>
</dbReference>
<dbReference type="Gene3D" id="1.10.1270.20">
    <property type="entry name" value="tRNA(m1g37)methyltransferase, domain 2"/>
    <property type="match status" value="1"/>
</dbReference>
<dbReference type="HAMAP" id="MF_00605">
    <property type="entry name" value="TrmD"/>
    <property type="match status" value="1"/>
</dbReference>
<dbReference type="InterPro" id="IPR029028">
    <property type="entry name" value="Alpha/beta_knot_MTases"/>
</dbReference>
<dbReference type="InterPro" id="IPR023148">
    <property type="entry name" value="tRNA_m1G_MeTrfase_C_sf"/>
</dbReference>
<dbReference type="InterPro" id="IPR002649">
    <property type="entry name" value="tRNA_m1G_MeTrfase_TrmD"/>
</dbReference>
<dbReference type="InterPro" id="IPR029026">
    <property type="entry name" value="tRNA_m1G_MTases_N"/>
</dbReference>
<dbReference type="InterPro" id="IPR016009">
    <property type="entry name" value="tRNA_MeTrfase_TRMD/TRM10"/>
</dbReference>
<dbReference type="NCBIfam" id="NF000648">
    <property type="entry name" value="PRK00026.1"/>
    <property type="match status" value="1"/>
</dbReference>
<dbReference type="NCBIfam" id="TIGR00088">
    <property type="entry name" value="trmD"/>
    <property type="match status" value="1"/>
</dbReference>
<dbReference type="PANTHER" id="PTHR46417">
    <property type="entry name" value="TRNA (GUANINE-N(1)-)-METHYLTRANSFERASE"/>
    <property type="match status" value="1"/>
</dbReference>
<dbReference type="PANTHER" id="PTHR46417:SF1">
    <property type="entry name" value="TRNA (GUANINE-N(1)-)-METHYLTRANSFERASE"/>
    <property type="match status" value="1"/>
</dbReference>
<dbReference type="Pfam" id="PF01746">
    <property type="entry name" value="tRNA_m1G_MT"/>
    <property type="match status" value="1"/>
</dbReference>
<dbReference type="PIRSF" id="PIRSF000386">
    <property type="entry name" value="tRNA_mtase"/>
    <property type="match status" value="1"/>
</dbReference>
<dbReference type="SUPFAM" id="SSF75217">
    <property type="entry name" value="alpha/beta knot"/>
    <property type="match status" value="1"/>
</dbReference>
<keyword id="KW-0963">Cytoplasm</keyword>
<keyword id="KW-0489">Methyltransferase</keyword>
<keyword id="KW-1185">Reference proteome</keyword>
<keyword id="KW-0949">S-adenosyl-L-methionine</keyword>
<keyword id="KW-0808">Transferase</keyword>
<keyword id="KW-0819">tRNA processing</keyword>
<evidence type="ECO:0000250" key="1"/>
<evidence type="ECO:0000305" key="2"/>
<accession>Q97I94</accession>
<proteinExistence type="inferred from homology"/>
<feature type="chain" id="PRO_0000060360" description="tRNA (guanine-N(1)-)-methyltransferase">
    <location>
        <begin position="1"/>
        <end position="242"/>
    </location>
</feature>
<feature type="binding site" evidence="1">
    <location>
        <position position="114"/>
    </location>
    <ligand>
        <name>S-adenosyl-L-methionine</name>
        <dbReference type="ChEBI" id="CHEBI:59789"/>
    </ligand>
</feature>
<feature type="binding site" evidence="1">
    <location>
        <begin position="133"/>
        <end position="138"/>
    </location>
    <ligand>
        <name>S-adenosyl-L-methionine</name>
        <dbReference type="ChEBI" id="CHEBI:59789"/>
    </ligand>
</feature>
<sequence length="242" mass="27971">MARKLKIDILTLFPEMFDLFNLSMIGRAKKNGIIEINTYNIRDYTIDKHKKTDDYPYGGGAGMVMTPQPIVDSIRSVKESNKGKVIFLGPRGKKFDQEDAKKLADREELIILCGHYEGIDERVYKYIDEEYSLGDFVLTGGEMACIPIVDSICRMIPGVLSKSESYIEESFYSGLLEYPQYTRPEEFEGARVPDVLISGHHENIRKWRRKQALKITKDRRKDLFDKLVMTKEDKKLLNDNEL</sequence>
<reference key="1">
    <citation type="journal article" date="2001" name="J. Bacteriol.">
        <title>Genome sequence and comparative analysis of the solvent-producing bacterium Clostridium acetobutylicum.</title>
        <authorList>
            <person name="Noelling J."/>
            <person name="Breton G."/>
            <person name="Omelchenko M.V."/>
            <person name="Makarova K.S."/>
            <person name="Zeng Q."/>
            <person name="Gibson R."/>
            <person name="Lee H.M."/>
            <person name="Dubois J."/>
            <person name="Qiu D."/>
            <person name="Hitti J."/>
            <person name="Wolf Y.I."/>
            <person name="Tatusov R.L."/>
            <person name="Sabathe F."/>
            <person name="Doucette-Stamm L.A."/>
            <person name="Soucaille P."/>
            <person name="Daly M.J."/>
            <person name="Bennett G.N."/>
            <person name="Koonin E.V."/>
            <person name="Smith D.R."/>
        </authorList>
    </citation>
    <scope>NUCLEOTIDE SEQUENCE [LARGE SCALE GENOMIC DNA]</scope>
    <source>
        <strain>ATCC 824 / DSM 792 / JCM 1419 / IAM 19013 / LMG 5710 / NBRC 13948 / NRRL B-527 / VKM B-1787 / 2291 / W</strain>
    </source>
</reference>
<protein>
    <recommendedName>
        <fullName>tRNA (guanine-N(1)-)-methyltransferase</fullName>
        <ecNumber>2.1.1.228</ecNumber>
    </recommendedName>
    <alternativeName>
        <fullName>M1G-methyltransferase</fullName>
    </alternativeName>
    <alternativeName>
        <fullName>tRNA [GM37] methyltransferase</fullName>
    </alternativeName>
</protein>
<gene>
    <name type="primary">trmD</name>
    <name type="ordered locus">CA_C1758</name>
</gene>
<comment type="function">
    <text evidence="1">Specifically methylates guanosine-37 in various tRNAs.</text>
</comment>
<comment type="catalytic activity">
    <reaction>
        <text>guanosine(37) in tRNA + S-adenosyl-L-methionine = N(1)-methylguanosine(37) in tRNA + S-adenosyl-L-homocysteine + H(+)</text>
        <dbReference type="Rhea" id="RHEA:36899"/>
        <dbReference type="Rhea" id="RHEA-COMP:10145"/>
        <dbReference type="Rhea" id="RHEA-COMP:10147"/>
        <dbReference type="ChEBI" id="CHEBI:15378"/>
        <dbReference type="ChEBI" id="CHEBI:57856"/>
        <dbReference type="ChEBI" id="CHEBI:59789"/>
        <dbReference type="ChEBI" id="CHEBI:73542"/>
        <dbReference type="ChEBI" id="CHEBI:74269"/>
        <dbReference type="EC" id="2.1.1.228"/>
    </reaction>
</comment>
<comment type="subunit">
    <text evidence="1">Homodimer.</text>
</comment>
<comment type="subcellular location">
    <subcellularLocation>
        <location evidence="2">Cytoplasm</location>
    </subcellularLocation>
</comment>
<comment type="similarity">
    <text evidence="2">Belongs to the RNA methyltransferase TrmD family.</text>
</comment>